<sequence length="308" mass="33637">MSKTAIIFPGQGAQKVGMAQDLYNNNDQATEILTSAANTLDFDILETMFTDEEGKLGETENTQPALLTHSSALLAALKNLNPDFTMGHSLGEYSSLVAADVLSFEDAVKIVRKRGQLMAQAFPSGVGSMAAVLGLDFDKVDEICKSLSSDDKIIEPANINCPGQIVVSGHKALIDELVEKGKSLGAKRVMPLAVSGPFHSSLMKVIEEDFSSYINQFEWRDAKFPVVQNVNAQGETDKEVIKSNMVKQLYSPVQFINSTEWLIDQGVDHFIEIGPGKVLSGLIKKINRDVKLTSIQTLEDVKGWNEND</sequence>
<proteinExistence type="inferred from homology"/>
<dbReference type="EC" id="2.3.1.39"/>
<dbReference type="EMBL" id="BX571856">
    <property type="protein sequence ID" value="CAG40208.1"/>
    <property type="molecule type" value="Genomic_DNA"/>
</dbReference>
<dbReference type="RefSeq" id="WP_000047355.1">
    <property type="nucleotide sequence ID" value="NC_002952.2"/>
</dbReference>
<dbReference type="SMR" id="Q6GHK5"/>
<dbReference type="KEGG" id="sar:SAR1206"/>
<dbReference type="HOGENOM" id="CLU_030558_0_1_9"/>
<dbReference type="UniPathway" id="UPA00094"/>
<dbReference type="Proteomes" id="UP000000596">
    <property type="component" value="Chromosome"/>
</dbReference>
<dbReference type="GO" id="GO:0005829">
    <property type="term" value="C:cytosol"/>
    <property type="evidence" value="ECO:0007669"/>
    <property type="project" value="TreeGrafter"/>
</dbReference>
<dbReference type="GO" id="GO:0004314">
    <property type="term" value="F:[acyl-carrier-protein] S-malonyltransferase activity"/>
    <property type="evidence" value="ECO:0007669"/>
    <property type="project" value="UniProtKB-EC"/>
</dbReference>
<dbReference type="GO" id="GO:0006633">
    <property type="term" value="P:fatty acid biosynthetic process"/>
    <property type="evidence" value="ECO:0007669"/>
    <property type="project" value="UniProtKB-UniPathway"/>
</dbReference>
<dbReference type="FunFam" id="3.30.70.250:FF:000001">
    <property type="entry name" value="Malonyl CoA-acyl carrier protein transacylase"/>
    <property type="match status" value="1"/>
</dbReference>
<dbReference type="Gene3D" id="3.30.70.250">
    <property type="entry name" value="Malonyl-CoA ACP transacylase, ACP-binding"/>
    <property type="match status" value="1"/>
</dbReference>
<dbReference type="Gene3D" id="3.40.366.10">
    <property type="entry name" value="Malonyl-Coenzyme A Acyl Carrier Protein, domain 2"/>
    <property type="match status" value="1"/>
</dbReference>
<dbReference type="InterPro" id="IPR001227">
    <property type="entry name" value="Ac_transferase_dom_sf"/>
</dbReference>
<dbReference type="InterPro" id="IPR014043">
    <property type="entry name" value="Acyl_transferase_dom"/>
</dbReference>
<dbReference type="InterPro" id="IPR016035">
    <property type="entry name" value="Acyl_Trfase/lysoPLipase"/>
</dbReference>
<dbReference type="InterPro" id="IPR050858">
    <property type="entry name" value="Mal-CoA-ACP_Trans/PKS_FabD"/>
</dbReference>
<dbReference type="InterPro" id="IPR024925">
    <property type="entry name" value="Malonyl_CoA-ACP_transAc"/>
</dbReference>
<dbReference type="InterPro" id="IPR004410">
    <property type="entry name" value="Malonyl_CoA-ACP_transAc_FabD"/>
</dbReference>
<dbReference type="InterPro" id="IPR016036">
    <property type="entry name" value="Malonyl_transacylase_ACP-bd"/>
</dbReference>
<dbReference type="NCBIfam" id="TIGR00128">
    <property type="entry name" value="fabD"/>
    <property type="match status" value="1"/>
</dbReference>
<dbReference type="PANTHER" id="PTHR42681">
    <property type="entry name" value="MALONYL-COA-ACYL CARRIER PROTEIN TRANSACYLASE, MITOCHONDRIAL"/>
    <property type="match status" value="1"/>
</dbReference>
<dbReference type="PANTHER" id="PTHR42681:SF1">
    <property type="entry name" value="MALONYL-COA-ACYL CARRIER PROTEIN TRANSACYLASE, MITOCHONDRIAL"/>
    <property type="match status" value="1"/>
</dbReference>
<dbReference type="Pfam" id="PF00698">
    <property type="entry name" value="Acyl_transf_1"/>
    <property type="match status" value="1"/>
</dbReference>
<dbReference type="PIRSF" id="PIRSF000446">
    <property type="entry name" value="Mct"/>
    <property type="match status" value="1"/>
</dbReference>
<dbReference type="SMART" id="SM00827">
    <property type="entry name" value="PKS_AT"/>
    <property type="match status" value="1"/>
</dbReference>
<dbReference type="SUPFAM" id="SSF52151">
    <property type="entry name" value="FabD/lysophospholipase-like"/>
    <property type="match status" value="1"/>
</dbReference>
<dbReference type="SUPFAM" id="SSF55048">
    <property type="entry name" value="Probable ACP-binding domain of malonyl-CoA ACP transacylase"/>
    <property type="match status" value="1"/>
</dbReference>
<gene>
    <name type="primary">fabD</name>
    <name type="ordered locus">SAR1206</name>
</gene>
<comment type="catalytic activity">
    <reaction>
        <text>holo-[ACP] + malonyl-CoA = malonyl-[ACP] + CoA</text>
        <dbReference type="Rhea" id="RHEA:41792"/>
        <dbReference type="Rhea" id="RHEA-COMP:9623"/>
        <dbReference type="Rhea" id="RHEA-COMP:9685"/>
        <dbReference type="ChEBI" id="CHEBI:57287"/>
        <dbReference type="ChEBI" id="CHEBI:57384"/>
        <dbReference type="ChEBI" id="CHEBI:64479"/>
        <dbReference type="ChEBI" id="CHEBI:78449"/>
        <dbReference type="EC" id="2.3.1.39"/>
    </reaction>
</comment>
<comment type="pathway">
    <text>Lipid metabolism; fatty acid biosynthesis.</text>
</comment>
<comment type="similarity">
    <text evidence="2">Belongs to the FabD family.</text>
</comment>
<accession>Q6GHK5</accession>
<organism>
    <name type="scientific">Staphylococcus aureus (strain MRSA252)</name>
    <dbReference type="NCBI Taxonomy" id="282458"/>
    <lineage>
        <taxon>Bacteria</taxon>
        <taxon>Bacillati</taxon>
        <taxon>Bacillota</taxon>
        <taxon>Bacilli</taxon>
        <taxon>Bacillales</taxon>
        <taxon>Staphylococcaceae</taxon>
        <taxon>Staphylococcus</taxon>
    </lineage>
</organism>
<reference key="1">
    <citation type="journal article" date="2004" name="Proc. Natl. Acad. Sci. U.S.A.">
        <title>Complete genomes of two clinical Staphylococcus aureus strains: evidence for the rapid evolution of virulence and drug resistance.</title>
        <authorList>
            <person name="Holden M.T.G."/>
            <person name="Feil E.J."/>
            <person name="Lindsay J.A."/>
            <person name="Peacock S.J."/>
            <person name="Day N.P.J."/>
            <person name="Enright M.C."/>
            <person name="Foster T.J."/>
            <person name="Moore C.E."/>
            <person name="Hurst L."/>
            <person name="Atkin R."/>
            <person name="Barron A."/>
            <person name="Bason N."/>
            <person name="Bentley S.D."/>
            <person name="Chillingworth C."/>
            <person name="Chillingworth T."/>
            <person name="Churcher C."/>
            <person name="Clark L."/>
            <person name="Corton C."/>
            <person name="Cronin A."/>
            <person name="Doggett J."/>
            <person name="Dowd L."/>
            <person name="Feltwell T."/>
            <person name="Hance Z."/>
            <person name="Harris B."/>
            <person name="Hauser H."/>
            <person name="Holroyd S."/>
            <person name="Jagels K."/>
            <person name="James K.D."/>
            <person name="Lennard N."/>
            <person name="Line A."/>
            <person name="Mayes R."/>
            <person name="Moule S."/>
            <person name="Mungall K."/>
            <person name="Ormond D."/>
            <person name="Quail M.A."/>
            <person name="Rabbinowitsch E."/>
            <person name="Rutherford K.M."/>
            <person name="Sanders M."/>
            <person name="Sharp S."/>
            <person name="Simmonds M."/>
            <person name="Stevens K."/>
            <person name="Whitehead S."/>
            <person name="Barrell B.G."/>
            <person name="Spratt B.G."/>
            <person name="Parkhill J."/>
        </authorList>
    </citation>
    <scope>NUCLEOTIDE SEQUENCE [LARGE SCALE GENOMIC DNA]</scope>
    <source>
        <strain>MRSA252</strain>
    </source>
</reference>
<keyword id="KW-0012">Acyltransferase</keyword>
<keyword id="KW-0275">Fatty acid biosynthesis</keyword>
<keyword id="KW-0276">Fatty acid metabolism</keyword>
<keyword id="KW-0444">Lipid biosynthesis</keyword>
<keyword id="KW-0443">Lipid metabolism</keyword>
<keyword id="KW-0808">Transferase</keyword>
<name>FABD_STAAR</name>
<evidence type="ECO:0000250" key="1"/>
<evidence type="ECO:0000305" key="2"/>
<protein>
    <recommendedName>
        <fullName>Malonyl CoA-acyl carrier protein transacylase</fullName>
        <shortName>MCT</shortName>
        <ecNumber>2.3.1.39</ecNumber>
    </recommendedName>
</protein>
<feature type="chain" id="PRO_0000194222" description="Malonyl CoA-acyl carrier protein transacylase">
    <location>
        <begin position="1"/>
        <end position="308"/>
    </location>
</feature>
<feature type="active site" evidence="1">
    <location>
        <position position="89"/>
    </location>
</feature>
<feature type="active site" evidence="1">
    <location>
        <position position="199"/>
    </location>
</feature>